<evidence type="ECO:0000255" key="1">
    <source>
        <dbReference type="HAMAP-Rule" id="MF_00028"/>
    </source>
</evidence>
<feature type="chain" id="PRO_1000116435" description="Cobyric acid synthase">
    <location>
        <begin position="1"/>
        <end position="490"/>
    </location>
</feature>
<feature type="domain" description="GATase cobBQ-type" evidence="1">
    <location>
        <begin position="252"/>
        <end position="439"/>
    </location>
</feature>
<feature type="active site" description="Nucleophile" evidence="1">
    <location>
        <position position="333"/>
    </location>
</feature>
<feature type="active site" evidence="1">
    <location>
        <position position="431"/>
    </location>
</feature>
<protein>
    <recommendedName>
        <fullName evidence="1">Cobyric acid synthase</fullName>
    </recommendedName>
</protein>
<name>COBQ_PSEA8</name>
<comment type="function">
    <text evidence="1">Catalyzes amidations at positions B, D, E, and G on adenosylcobyrinic A,C-diamide. NH(2) groups are provided by glutamine, and one molecule of ATP is hydrogenolyzed for each amidation.</text>
</comment>
<comment type="pathway">
    <text evidence="1">Cofactor biosynthesis; adenosylcobalamin biosynthesis.</text>
</comment>
<comment type="similarity">
    <text evidence="1">Belongs to the CobB/CobQ family. CobQ subfamily.</text>
</comment>
<gene>
    <name evidence="1" type="primary">cobQ</name>
    <name type="ordered locus">PLES_40351</name>
</gene>
<proteinExistence type="inferred from homology"/>
<accession>B7UWH3</accession>
<dbReference type="EMBL" id="FM209186">
    <property type="protein sequence ID" value="CAW28789.1"/>
    <property type="molecule type" value="Genomic_DNA"/>
</dbReference>
<dbReference type="RefSeq" id="WP_003123097.1">
    <property type="nucleotide sequence ID" value="NC_011770.1"/>
</dbReference>
<dbReference type="SMR" id="B7UWH3"/>
<dbReference type="KEGG" id="pag:PLES_40351"/>
<dbReference type="HOGENOM" id="CLU_019250_2_2_6"/>
<dbReference type="UniPathway" id="UPA00148"/>
<dbReference type="GO" id="GO:0015420">
    <property type="term" value="F:ABC-type vitamin B12 transporter activity"/>
    <property type="evidence" value="ECO:0007669"/>
    <property type="project" value="UniProtKB-UniRule"/>
</dbReference>
<dbReference type="GO" id="GO:0003824">
    <property type="term" value="F:catalytic activity"/>
    <property type="evidence" value="ECO:0007669"/>
    <property type="project" value="InterPro"/>
</dbReference>
<dbReference type="GO" id="GO:0009236">
    <property type="term" value="P:cobalamin biosynthetic process"/>
    <property type="evidence" value="ECO:0007669"/>
    <property type="project" value="UniProtKB-UniRule"/>
</dbReference>
<dbReference type="CDD" id="cd05389">
    <property type="entry name" value="CobQ_N"/>
    <property type="match status" value="1"/>
</dbReference>
<dbReference type="CDD" id="cd01750">
    <property type="entry name" value="GATase1_CobQ"/>
    <property type="match status" value="1"/>
</dbReference>
<dbReference type="Gene3D" id="3.40.50.880">
    <property type="match status" value="1"/>
</dbReference>
<dbReference type="Gene3D" id="3.40.50.300">
    <property type="entry name" value="P-loop containing nucleotide triphosphate hydrolases"/>
    <property type="match status" value="1"/>
</dbReference>
<dbReference type="HAMAP" id="MF_00028">
    <property type="entry name" value="CobQ"/>
    <property type="match status" value="1"/>
</dbReference>
<dbReference type="InterPro" id="IPR029062">
    <property type="entry name" value="Class_I_gatase-like"/>
</dbReference>
<dbReference type="InterPro" id="IPR002586">
    <property type="entry name" value="CobQ/CobB/MinD/ParA_Nub-bd_dom"/>
</dbReference>
<dbReference type="InterPro" id="IPR033949">
    <property type="entry name" value="CobQ_GATase1"/>
</dbReference>
<dbReference type="InterPro" id="IPR047045">
    <property type="entry name" value="CobQ_N"/>
</dbReference>
<dbReference type="InterPro" id="IPR004459">
    <property type="entry name" value="CobQ_synth"/>
</dbReference>
<dbReference type="InterPro" id="IPR011698">
    <property type="entry name" value="GATase_3"/>
</dbReference>
<dbReference type="InterPro" id="IPR027417">
    <property type="entry name" value="P-loop_NTPase"/>
</dbReference>
<dbReference type="NCBIfam" id="TIGR00313">
    <property type="entry name" value="cobQ"/>
    <property type="match status" value="1"/>
</dbReference>
<dbReference type="NCBIfam" id="NF001989">
    <property type="entry name" value="PRK00784.1"/>
    <property type="match status" value="1"/>
</dbReference>
<dbReference type="PANTHER" id="PTHR21343:SF1">
    <property type="entry name" value="COBYRIC ACID SYNTHASE"/>
    <property type="match status" value="1"/>
</dbReference>
<dbReference type="PANTHER" id="PTHR21343">
    <property type="entry name" value="DETHIOBIOTIN SYNTHETASE"/>
    <property type="match status" value="1"/>
</dbReference>
<dbReference type="Pfam" id="PF01656">
    <property type="entry name" value="CbiA"/>
    <property type="match status" value="1"/>
</dbReference>
<dbReference type="Pfam" id="PF07685">
    <property type="entry name" value="GATase_3"/>
    <property type="match status" value="1"/>
</dbReference>
<dbReference type="SUPFAM" id="SSF52317">
    <property type="entry name" value="Class I glutamine amidotransferase-like"/>
    <property type="match status" value="1"/>
</dbReference>
<dbReference type="SUPFAM" id="SSF52540">
    <property type="entry name" value="P-loop containing nucleoside triphosphate hydrolases"/>
    <property type="match status" value="1"/>
</dbReference>
<dbReference type="PROSITE" id="PS51274">
    <property type="entry name" value="GATASE_COBBQ"/>
    <property type="match status" value="1"/>
</dbReference>
<keyword id="KW-0169">Cobalamin biosynthesis</keyword>
<keyword id="KW-0315">Glutamine amidotransferase</keyword>
<reference key="1">
    <citation type="journal article" date="2009" name="Genome Res.">
        <title>Newly introduced genomic prophage islands are critical determinants of in vivo competitiveness in the Liverpool epidemic strain of Pseudomonas aeruginosa.</title>
        <authorList>
            <person name="Winstanley C."/>
            <person name="Langille M.G.I."/>
            <person name="Fothergill J.L."/>
            <person name="Kukavica-Ibrulj I."/>
            <person name="Paradis-Bleau C."/>
            <person name="Sanschagrin F."/>
            <person name="Thomson N.R."/>
            <person name="Winsor G.L."/>
            <person name="Quail M.A."/>
            <person name="Lennard N."/>
            <person name="Bignell A."/>
            <person name="Clarke L."/>
            <person name="Seeger K."/>
            <person name="Saunders D."/>
            <person name="Harris D."/>
            <person name="Parkhill J."/>
            <person name="Hancock R.E.W."/>
            <person name="Brinkman F.S.L."/>
            <person name="Levesque R.C."/>
        </authorList>
    </citation>
    <scope>NUCLEOTIDE SEQUENCE [LARGE SCALE GENOMIC DNA]</scope>
    <source>
        <strain>LESB58</strain>
    </source>
</reference>
<organism>
    <name type="scientific">Pseudomonas aeruginosa (strain LESB58)</name>
    <dbReference type="NCBI Taxonomy" id="557722"/>
    <lineage>
        <taxon>Bacteria</taxon>
        <taxon>Pseudomonadati</taxon>
        <taxon>Pseudomonadota</taxon>
        <taxon>Gammaproteobacteria</taxon>
        <taxon>Pseudomonadales</taxon>
        <taxon>Pseudomonadaceae</taxon>
        <taxon>Pseudomonas</taxon>
    </lineage>
</organism>
<sequence length="490" mass="52400">MSDRGRTLMVQGTTSDAGKSTLVTALCRWLARRGVAVVPFKPQNMALNSAVTADGGEIGRAQAVQAQACRLAPHTDMNPVLLKPNTDIGAQVIIHGRAVTSMDAAAYHDYKRVAMEAVLASHGRLAAAYRVVMVEGAGSPAEINLRANDIANMGFAEAVDCPVILVADIDRGGVFAHLVGTLELLSDSERERVRGFVINRFRGDIALLQPGLDWLEARTGKPVLGVLPYVSDLHLEAEDAIDTRQAAKVGPRLKVVVPVLPRISNHTDFDPLRLHPQVELSFVGPGQALPSADLIVLPGSKSVRADLAALRERGWDEAILRHLRYGGRLLGICGGLQMLGERLHDPLGLEGAAGSSAGLGLLALETTLEADKQLRNVQGRLSLEDAPLSGYEIHAGVTRGEALARPAVVLDDGRADGARSVDGNVMGTYLHGLFESTAACSALLRWAGLREVQAVDYQALRERDIERLADLVERHLDTGRLLALCGEPHA</sequence>